<protein>
    <recommendedName>
        <fullName evidence="1">RNA polymerase sigma factor RpoD</fullName>
    </recommendedName>
    <alternativeName>
        <fullName evidence="1">Sigma-70</fullName>
    </alternativeName>
</protein>
<comment type="function">
    <text evidence="1 3">Sigma factors are initiation factors that promote the attachment of RNA polymerase to specific initiation sites and are then released. This sigma factor is the primary sigma factor during exponential growth.</text>
</comment>
<comment type="subunit">
    <text evidence="1">Interacts transiently with the RNA polymerase catalytic core.</text>
</comment>
<comment type="subcellular location">
    <subcellularLocation>
        <location evidence="1">Cytoplasm</location>
    </subcellularLocation>
</comment>
<comment type="induction">
    <text evidence="3">Expression is constant during exponential and early stationary phases, and increases significantly in later stationary phase.</text>
</comment>
<comment type="similarity">
    <text evidence="1">Belongs to the sigma-70 factor family. RpoD/SigA subfamily.</text>
</comment>
<organism>
    <name type="scientific">Rhodobacter capsulatus</name>
    <name type="common">Rhodopseudomonas capsulata</name>
    <dbReference type="NCBI Taxonomy" id="1061"/>
    <lineage>
        <taxon>Bacteria</taxon>
        <taxon>Pseudomonadati</taxon>
        <taxon>Pseudomonadota</taxon>
        <taxon>Alphaproteobacteria</taxon>
        <taxon>Rhodobacterales</taxon>
        <taxon>Rhodobacter group</taxon>
        <taxon>Rhodobacter</taxon>
    </lineage>
</organism>
<keyword id="KW-0963">Cytoplasm</keyword>
<keyword id="KW-0238">DNA-binding</keyword>
<keyword id="KW-0731">Sigma factor</keyword>
<keyword id="KW-0804">Transcription</keyword>
<keyword id="KW-0805">Transcription regulation</keyword>
<sequence>MAAKDIDDTKPDTAADEDASFDMSQAAVKRMIGEAKERGYITIDQLNAVMPPETVSGEQIEDVMSMLSEMGINVVEGEEVEESEGGEVVETGSGSREIAVAGAAGETLDRTDDPVRMYLREMGSVELLSREGEIAIAKRIEAGRNTMIAGLCESPLTFQAITIWRDELLSEEILLRDVIDLEATFGRSLDGDEGLEGMEGIEGPVVEGLDLEAAEGAAPAARRPASDEPEYDADGNPISRIDEEEDDDDSSNMSLAAMEAALKPKVLETLELIARDYAKLAEMQDLRMSATLNEDGTFTVAEEAAYQKLRSEIVLLVNELHLHNNRIEALIDQLYGINRKIMSIDSGMVKLADAARINRREFIDEYRGYELDPTWMDRMSAKPARAWVTLFEKSRHKVEDLRHEMAQVGQYVGVDISEFRRIVNQVQKGEKEARQAKKEMVEANLRLVISIAKKYTNRGLQFLDLIQEGNIGLMKAVDKFEYRRGYKFSTYATWWIRQAITRSIADQARTIRIPVHMIETINKLVRTGRQMLHEIGREPTPEELAEKLQMPLEKVRKVMKIAKEPISLETPIGHEEDSQLGDFIEDKNAILPLDSAIQENLKETTTRVLPSLTPREERVLRMRFGIGMNTDHTLEEVGQQFSVTRERIRQIEAKALRKLKHPSRSRKLPSFLDQ</sequence>
<proteinExistence type="evidence at transcript level"/>
<dbReference type="EMBL" id="Z68306">
    <property type="protein sequence ID" value="CAA92648.1"/>
    <property type="molecule type" value="Genomic_DNA"/>
</dbReference>
<dbReference type="PIR" id="JC5104">
    <property type="entry name" value="JC5104"/>
</dbReference>
<dbReference type="SMR" id="P0CZ15"/>
<dbReference type="GO" id="GO:0005737">
    <property type="term" value="C:cytoplasm"/>
    <property type="evidence" value="ECO:0007669"/>
    <property type="project" value="UniProtKB-SubCell"/>
</dbReference>
<dbReference type="GO" id="GO:0003677">
    <property type="term" value="F:DNA binding"/>
    <property type="evidence" value="ECO:0007669"/>
    <property type="project" value="UniProtKB-UniRule"/>
</dbReference>
<dbReference type="GO" id="GO:0016987">
    <property type="term" value="F:sigma factor activity"/>
    <property type="evidence" value="ECO:0007669"/>
    <property type="project" value="UniProtKB-UniRule"/>
</dbReference>
<dbReference type="GO" id="GO:0006352">
    <property type="term" value="P:DNA-templated transcription initiation"/>
    <property type="evidence" value="ECO:0007669"/>
    <property type="project" value="UniProtKB-UniRule"/>
</dbReference>
<dbReference type="CDD" id="cd06171">
    <property type="entry name" value="Sigma70_r4"/>
    <property type="match status" value="1"/>
</dbReference>
<dbReference type="FunFam" id="1.10.10.10:FF:000002">
    <property type="entry name" value="RNA polymerase sigma factor SigA"/>
    <property type="match status" value="1"/>
</dbReference>
<dbReference type="FunFam" id="1.10.601.10:FF:000001">
    <property type="entry name" value="RNA polymerase sigma factor SigA"/>
    <property type="match status" value="1"/>
</dbReference>
<dbReference type="Gene3D" id="1.10.601.10">
    <property type="entry name" value="RNA Polymerase Primary Sigma Factor"/>
    <property type="match status" value="1"/>
</dbReference>
<dbReference type="Gene3D" id="1.10.220.120">
    <property type="entry name" value="Sigma-70 factor, region 1.1"/>
    <property type="match status" value="1"/>
</dbReference>
<dbReference type="Gene3D" id="1.10.10.10">
    <property type="entry name" value="Winged helix-like DNA-binding domain superfamily/Winged helix DNA-binding domain"/>
    <property type="match status" value="2"/>
</dbReference>
<dbReference type="HAMAP" id="MF_00963">
    <property type="entry name" value="Sigma70_RpoD_SigA"/>
    <property type="match status" value="1"/>
</dbReference>
<dbReference type="InterPro" id="IPR014284">
    <property type="entry name" value="RNA_pol_sigma-70_dom"/>
</dbReference>
<dbReference type="InterPro" id="IPR000943">
    <property type="entry name" value="RNA_pol_sigma70"/>
</dbReference>
<dbReference type="InterPro" id="IPR009042">
    <property type="entry name" value="RNA_pol_sigma70_r1_2"/>
</dbReference>
<dbReference type="InterPro" id="IPR007627">
    <property type="entry name" value="RNA_pol_sigma70_r2"/>
</dbReference>
<dbReference type="InterPro" id="IPR007624">
    <property type="entry name" value="RNA_pol_sigma70_r3"/>
</dbReference>
<dbReference type="InterPro" id="IPR007630">
    <property type="entry name" value="RNA_pol_sigma70_r4"/>
</dbReference>
<dbReference type="InterPro" id="IPR007631">
    <property type="entry name" value="RNA_pol_sigma_70_non-ess"/>
</dbReference>
<dbReference type="InterPro" id="IPR007127">
    <property type="entry name" value="RNA_pol_sigma_70_r1_1"/>
</dbReference>
<dbReference type="InterPro" id="IPR042189">
    <property type="entry name" value="RNA_pol_sigma_70_r1_1_sf"/>
</dbReference>
<dbReference type="InterPro" id="IPR013325">
    <property type="entry name" value="RNA_pol_sigma_r2"/>
</dbReference>
<dbReference type="InterPro" id="IPR013324">
    <property type="entry name" value="RNA_pol_sigma_r3/r4-like"/>
</dbReference>
<dbReference type="InterPro" id="IPR012760">
    <property type="entry name" value="RNA_pol_sigma_RpoD_C"/>
</dbReference>
<dbReference type="InterPro" id="IPR050239">
    <property type="entry name" value="Sigma-70_RNA_pol_init_factors"/>
</dbReference>
<dbReference type="InterPro" id="IPR028630">
    <property type="entry name" value="Sigma70_RpoD"/>
</dbReference>
<dbReference type="InterPro" id="IPR036388">
    <property type="entry name" value="WH-like_DNA-bd_sf"/>
</dbReference>
<dbReference type="NCBIfam" id="NF004208">
    <property type="entry name" value="PRK05658.1"/>
    <property type="match status" value="1"/>
</dbReference>
<dbReference type="NCBIfam" id="TIGR02393">
    <property type="entry name" value="RpoD_Cterm"/>
    <property type="match status" value="1"/>
</dbReference>
<dbReference type="NCBIfam" id="TIGR02937">
    <property type="entry name" value="sigma70-ECF"/>
    <property type="match status" value="1"/>
</dbReference>
<dbReference type="PANTHER" id="PTHR30603">
    <property type="entry name" value="RNA POLYMERASE SIGMA FACTOR RPO"/>
    <property type="match status" value="1"/>
</dbReference>
<dbReference type="PANTHER" id="PTHR30603:SF60">
    <property type="entry name" value="RNA POLYMERASE SIGMA FACTOR RPOD"/>
    <property type="match status" value="1"/>
</dbReference>
<dbReference type="Pfam" id="PF04546">
    <property type="entry name" value="Sigma70_ner"/>
    <property type="match status" value="1"/>
</dbReference>
<dbReference type="Pfam" id="PF03979">
    <property type="entry name" value="Sigma70_r1_1"/>
    <property type="match status" value="1"/>
</dbReference>
<dbReference type="Pfam" id="PF00140">
    <property type="entry name" value="Sigma70_r1_2"/>
    <property type="match status" value="1"/>
</dbReference>
<dbReference type="Pfam" id="PF04542">
    <property type="entry name" value="Sigma70_r2"/>
    <property type="match status" value="1"/>
</dbReference>
<dbReference type="Pfam" id="PF04539">
    <property type="entry name" value="Sigma70_r3"/>
    <property type="match status" value="1"/>
</dbReference>
<dbReference type="Pfam" id="PF04545">
    <property type="entry name" value="Sigma70_r4"/>
    <property type="match status" value="1"/>
</dbReference>
<dbReference type="PRINTS" id="PR00046">
    <property type="entry name" value="SIGMA70FCT"/>
</dbReference>
<dbReference type="SUPFAM" id="SSF88946">
    <property type="entry name" value="Sigma2 domain of RNA polymerase sigma factors"/>
    <property type="match status" value="1"/>
</dbReference>
<dbReference type="SUPFAM" id="SSF88659">
    <property type="entry name" value="Sigma3 and sigma4 domains of RNA polymerase sigma factors"/>
    <property type="match status" value="2"/>
</dbReference>
<dbReference type="PROSITE" id="PS00715">
    <property type="entry name" value="SIGMA70_1"/>
    <property type="match status" value="1"/>
</dbReference>
<dbReference type="PROSITE" id="PS00716">
    <property type="entry name" value="SIGMA70_2"/>
    <property type="match status" value="1"/>
</dbReference>
<gene>
    <name evidence="1" type="primary">rpoD</name>
</gene>
<evidence type="ECO:0000255" key="1">
    <source>
        <dbReference type="HAMAP-Rule" id="MF_00963"/>
    </source>
</evidence>
<evidence type="ECO:0000256" key="2">
    <source>
        <dbReference type="SAM" id="MobiDB-lite"/>
    </source>
</evidence>
<evidence type="ECO:0000269" key="3">
    <source>
    </source>
</evidence>
<feature type="chain" id="PRO_0000093909" description="RNA polymerase sigma factor RpoD">
    <location>
        <begin position="1"/>
        <end position="674"/>
    </location>
</feature>
<feature type="DNA-binding region" description="H-T-H motif" evidence="1">
    <location>
        <begin position="634"/>
        <end position="653"/>
    </location>
</feature>
<feature type="region of interest" description="Disordered" evidence="2">
    <location>
        <begin position="216"/>
        <end position="252"/>
    </location>
</feature>
<feature type="region of interest" description="Sigma-70 factor domain-2" evidence="1">
    <location>
        <begin position="440"/>
        <end position="510"/>
    </location>
</feature>
<feature type="region of interest" description="Sigma-70 factor domain-3" evidence="1">
    <location>
        <begin position="519"/>
        <end position="595"/>
    </location>
</feature>
<feature type="region of interest" description="Sigma-70 factor domain-4" evidence="1">
    <location>
        <begin position="608"/>
        <end position="661"/>
    </location>
</feature>
<feature type="short sequence motif" description="Interaction with polymerase core subunit RpoC">
    <location>
        <begin position="464"/>
        <end position="467"/>
    </location>
</feature>
<reference key="1">
    <citation type="journal article" date="1996" name="Gene">
        <title>Cloning, nucleotide sequence and characterization of the rpoD gene encoding the primary sigma factor of Rhodobacter capsulatus.</title>
        <authorList>
            <person name="Pasternak C."/>
            <person name="Chen W."/>
            <person name="Heck C."/>
            <person name="Klug G."/>
        </authorList>
    </citation>
    <scope>NUCLEOTIDE SEQUENCE [GENOMIC DNA]</scope>
    <scope>FUNCTION</scope>
    <scope>INDUCTION</scope>
    <source>
        <strain>DSM 938 / 37b4</strain>
    </source>
</reference>
<accession>P0CZ15</accession>
<accession>P46400</accession>
<name>RPOD_RHOCA</name>